<evidence type="ECO:0000255" key="1">
    <source>
        <dbReference type="HAMAP-Rule" id="MF_00083"/>
    </source>
</evidence>
<keyword id="KW-0963">Cytoplasm</keyword>
<keyword id="KW-0378">Hydrolase</keyword>
<keyword id="KW-0694">RNA-binding</keyword>
<keyword id="KW-0820">tRNA-binding</keyword>
<feature type="chain" id="PRO_1000092899" description="Peptidyl-tRNA hydrolase">
    <location>
        <begin position="1"/>
        <end position="193"/>
    </location>
</feature>
<feature type="active site" description="Proton acceptor" evidence="1">
    <location>
        <position position="22"/>
    </location>
</feature>
<feature type="binding site" evidence="1">
    <location>
        <position position="17"/>
    </location>
    <ligand>
        <name>tRNA</name>
        <dbReference type="ChEBI" id="CHEBI:17843"/>
    </ligand>
</feature>
<feature type="binding site" evidence="1">
    <location>
        <position position="68"/>
    </location>
    <ligand>
        <name>tRNA</name>
        <dbReference type="ChEBI" id="CHEBI:17843"/>
    </ligand>
</feature>
<feature type="binding site" evidence="1">
    <location>
        <position position="70"/>
    </location>
    <ligand>
        <name>tRNA</name>
        <dbReference type="ChEBI" id="CHEBI:17843"/>
    </ligand>
</feature>
<feature type="binding site" evidence="1">
    <location>
        <position position="116"/>
    </location>
    <ligand>
        <name>tRNA</name>
        <dbReference type="ChEBI" id="CHEBI:17843"/>
    </ligand>
</feature>
<feature type="site" description="Discriminates between blocked and unblocked aminoacyl-tRNA" evidence="1">
    <location>
        <position position="12"/>
    </location>
</feature>
<feature type="site" description="Stabilizes the basic form of H active site to accept a proton" evidence="1">
    <location>
        <position position="95"/>
    </location>
</feature>
<organism>
    <name type="scientific">Acinetobacter baumannii (strain AYE)</name>
    <dbReference type="NCBI Taxonomy" id="509173"/>
    <lineage>
        <taxon>Bacteria</taxon>
        <taxon>Pseudomonadati</taxon>
        <taxon>Pseudomonadota</taxon>
        <taxon>Gammaproteobacteria</taxon>
        <taxon>Moraxellales</taxon>
        <taxon>Moraxellaceae</taxon>
        <taxon>Acinetobacter</taxon>
        <taxon>Acinetobacter calcoaceticus/baumannii complex</taxon>
    </lineage>
</organism>
<sequence length="193" mass="20911">MSNISLIVGLGNPGSEYAQTRHNAGFWFVEQLADKYGITLKNDPKFHGISGRGNIEGHDVRLLLPMTYMNRSGQSVVPFSKFYQIAPEAILIAHDELDMNPGVIRLKTGGGHGGHNGLRDIVPHIGPNFHRLRIGIGHPGSKERVSGHVLGKAPSSEQSLMDGAIDHALSKVKLLVQGQVPQAMNQINAYKPA</sequence>
<comment type="function">
    <text evidence="1">Hydrolyzes ribosome-free peptidyl-tRNAs (with 1 or more amino acids incorporated), which drop off the ribosome during protein synthesis, or as a result of ribosome stalling.</text>
</comment>
<comment type="function">
    <text evidence="1">Catalyzes the release of premature peptidyl moieties from peptidyl-tRNA molecules trapped in stalled 50S ribosomal subunits, and thus maintains levels of free tRNAs and 50S ribosomes.</text>
</comment>
<comment type="catalytic activity">
    <reaction evidence="1">
        <text>an N-acyl-L-alpha-aminoacyl-tRNA + H2O = an N-acyl-L-amino acid + a tRNA + H(+)</text>
        <dbReference type="Rhea" id="RHEA:54448"/>
        <dbReference type="Rhea" id="RHEA-COMP:10123"/>
        <dbReference type="Rhea" id="RHEA-COMP:13883"/>
        <dbReference type="ChEBI" id="CHEBI:15377"/>
        <dbReference type="ChEBI" id="CHEBI:15378"/>
        <dbReference type="ChEBI" id="CHEBI:59874"/>
        <dbReference type="ChEBI" id="CHEBI:78442"/>
        <dbReference type="ChEBI" id="CHEBI:138191"/>
        <dbReference type="EC" id="3.1.1.29"/>
    </reaction>
</comment>
<comment type="subunit">
    <text evidence="1">Monomer.</text>
</comment>
<comment type="subcellular location">
    <subcellularLocation>
        <location evidence="1">Cytoplasm</location>
    </subcellularLocation>
</comment>
<comment type="similarity">
    <text evidence="1">Belongs to the PTH family.</text>
</comment>
<proteinExistence type="inferred from homology"/>
<gene>
    <name evidence="1" type="primary">pth</name>
    <name type="ordered locus">ABAYE2983</name>
</gene>
<reference key="1">
    <citation type="journal article" date="2008" name="PLoS ONE">
        <title>Comparative analysis of Acinetobacters: three genomes for three lifestyles.</title>
        <authorList>
            <person name="Vallenet D."/>
            <person name="Nordmann P."/>
            <person name="Barbe V."/>
            <person name="Poirel L."/>
            <person name="Mangenot S."/>
            <person name="Bataille E."/>
            <person name="Dossat C."/>
            <person name="Gas S."/>
            <person name="Kreimeyer A."/>
            <person name="Lenoble P."/>
            <person name="Oztas S."/>
            <person name="Poulain J."/>
            <person name="Segurens B."/>
            <person name="Robert C."/>
            <person name="Abergel C."/>
            <person name="Claverie J.-M."/>
            <person name="Raoult D."/>
            <person name="Medigue C."/>
            <person name="Weissenbach J."/>
            <person name="Cruveiller S."/>
        </authorList>
    </citation>
    <scope>NUCLEOTIDE SEQUENCE [LARGE SCALE GENOMIC DNA]</scope>
    <source>
        <strain>AYE</strain>
    </source>
</reference>
<protein>
    <recommendedName>
        <fullName evidence="1">Peptidyl-tRNA hydrolase</fullName>
        <shortName evidence="1">Pth</shortName>
        <ecNumber evidence="1">3.1.1.29</ecNumber>
    </recommendedName>
</protein>
<dbReference type="EC" id="3.1.1.29" evidence="1"/>
<dbReference type="EMBL" id="CU459141">
    <property type="protein sequence ID" value="CAM87803.1"/>
    <property type="molecule type" value="Genomic_DNA"/>
</dbReference>
<dbReference type="RefSeq" id="WP_000065594.1">
    <property type="nucleotide sequence ID" value="NZ_JBDGFB010000027.1"/>
</dbReference>
<dbReference type="SMR" id="B0V8G0"/>
<dbReference type="EnsemblBacteria" id="CAM87803">
    <property type="protein sequence ID" value="CAM87803"/>
    <property type="gene ID" value="ABAYE2983"/>
</dbReference>
<dbReference type="KEGG" id="aby:ABAYE2983"/>
<dbReference type="HOGENOM" id="CLU_062456_3_1_6"/>
<dbReference type="GO" id="GO:0005737">
    <property type="term" value="C:cytoplasm"/>
    <property type="evidence" value="ECO:0007669"/>
    <property type="project" value="UniProtKB-SubCell"/>
</dbReference>
<dbReference type="GO" id="GO:0004045">
    <property type="term" value="F:peptidyl-tRNA hydrolase activity"/>
    <property type="evidence" value="ECO:0007669"/>
    <property type="project" value="UniProtKB-UniRule"/>
</dbReference>
<dbReference type="GO" id="GO:0000049">
    <property type="term" value="F:tRNA binding"/>
    <property type="evidence" value="ECO:0007669"/>
    <property type="project" value="UniProtKB-UniRule"/>
</dbReference>
<dbReference type="GO" id="GO:0006515">
    <property type="term" value="P:protein quality control for misfolded or incompletely synthesized proteins"/>
    <property type="evidence" value="ECO:0007669"/>
    <property type="project" value="UniProtKB-UniRule"/>
</dbReference>
<dbReference type="GO" id="GO:0072344">
    <property type="term" value="P:rescue of stalled ribosome"/>
    <property type="evidence" value="ECO:0007669"/>
    <property type="project" value="UniProtKB-UniRule"/>
</dbReference>
<dbReference type="CDD" id="cd00462">
    <property type="entry name" value="PTH"/>
    <property type="match status" value="1"/>
</dbReference>
<dbReference type="FunFam" id="3.40.50.1470:FF:000001">
    <property type="entry name" value="Peptidyl-tRNA hydrolase"/>
    <property type="match status" value="1"/>
</dbReference>
<dbReference type="Gene3D" id="3.40.50.1470">
    <property type="entry name" value="Peptidyl-tRNA hydrolase"/>
    <property type="match status" value="1"/>
</dbReference>
<dbReference type="HAMAP" id="MF_00083">
    <property type="entry name" value="Pept_tRNA_hydro_bact"/>
    <property type="match status" value="1"/>
</dbReference>
<dbReference type="InterPro" id="IPR001328">
    <property type="entry name" value="Pept_tRNA_hydro"/>
</dbReference>
<dbReference type="InterPro" id="IPR018171">
    <property type="entry name" value="Pept_tRNA_hydro_CS"/>
</dbReference>
<dbReference type="InterPro" id="IPR036416">
    <property type="entry name" value="Pept_tRNA_hydro_sf"/>
</dbReference>
<dbReference type="NCBIfam" id="TIGR00447">
    <property type="entry name" value="pth"/>
    <property type="match status" value="1"/>
</dbReference>
<dbReference type="PANTHER" id="PTHR17224">
    <property type="entry name" value="PEPTIDYL-TRNA HYDROLASE"/>
    <property type="match status" value="1"/>
</dbReference>
<dbReference type="PANTHER" id="PTHR17224:SF1">
    <property type="entry name" value="PEPTIDYL-TRNA HYDROLASE"/>
    <property type="match status" value="1"/>
</dbReference>
<dbReference type="Pfam" id="PF01195">
    <property type="entry name" value="Pept_tRNA_hydro"/>
    <property type="match status" value="1"/>
</dbReference>
<dbReference type="SUPFAM" id="SSF53178">
    <property type="entry name" value="Peptidyl-tRNA hydrolase-like"/>
    <property type="match status" value="1"/>
</dbReference>
<dbReference type="PROSITE" id="PS01195">
    <property type="entry name" value="PEPT_TRNA_HYDROL_1"/>
    <property type="match status" value="1"/>
</dbReference>
<dbReference type="PROSITE" id="PS01196">
    <property type="entry name" value="PEPT_TRNA_HYDROL_2"/>
    <property type="match status" value="1"/>
</dbReference>
<name>PTH_ACIBY</name>
<accession>B0V8G0</accession>